<keyword id="KW-0997">Cell inner membrane</keyword>
<keyword id="KW-1003">Cell membrane</keyword>
<keyword id="KW-0472">Membrane</keyword>
<keyword id="KW-1185">Reference proteome</keyword>
<comment type="function">
    <text evidence="1">Could be involved in insertion of integral membrane proteins into the membrane.</text>
</comment>
<comment type="subcellular location">
    <subcellularLocation>
        <location evidence="1">Cell inner membrane</location>
        <topology evidence="1">Peripheral membrane protein</topology>
        <orientation evidence="1">Cytoplasmic side</orientation>
    </subcellularLocation>
</comment>
<comment type="similarity">
    <text evidence="1">Belongs to the UPF0161 family.</text>
</comment>
<proteinExistence type="inferred from homology"/>
<evidence type="ECO:0000255" key="1">
    <source>
        <dbReference type="HAMAP-Rule" id="MF_00386"/>
    </source>
</evidence>
<dbReference type="EMBL" id="CP000116">
    <property type="protein sequence ID" value="AAZ98488.1"/>
    <property type="molecule type" value="Genomic_DNA"/>
</dbReference>
<dbReference type="RefSeq" id="WP_011313047.1">
    <property type="nucleotide sequence ID" value="NC_007404.1"/>
</dbReference>
<dbReference type="STRING" id="292415.Tbd_2535"/>
<dbReference type="KEGG" id="tbd:Tbd_2535"/>
<dbReference type="eggNOG" id="COG0759">
    <property type="taxonomic scope" value="Bacteria"/>
</dbReference>
<dbReference type="HOGENOM" id="CLU_144811_6_1_4"/>
<dbReference type="OrthoDB" id="9801753at2"/>
<dbReference type="Proteomes" id="UP000008291">
    <property type="component" value="Chromosome"/>
</dbReference>
<dbReference type="GO" id="GO:0005886">
    <property type="term" value="C:plasma membrane"/>
    <property type="evidence" value="ECO:0007669"/>
    <property type="project" value="UniProtKB-SubCell"/>
</dbReference>
<dbReference type="HAMAP" id="MF_00386">
    <property type="entry name" value="UPF0161_YidD"/>
    <property type="match status" value="1"/>
</dbReference>
<dbReference type="InterPro" id="IPR002696">
    <property type="entry name" value="Membr_insert_effic_factor_YidD"/>
</dbReference>
<dbReference type="NCBIfam" id="TIGR00278">
    <property type="entry name" value="membrane protein insertion efficiency factor YidD"/>
    <property type="match status" value="1"/>
</dbReference>
<dbReference type="PANTHER" id="PTHR33383">
    <property type="entry name" value="MEMBRANE PROTEIN INSERTION EFFICIENCY FACTOR-RELATED"/>
    <property type="match status" value="1"/>
</dbReference>
<dbReference type="PANTHER" id="PTHR33383:SF1">
    <property type="entry name" value="MEMBRANE PROTEIN INSERTION EFFICIENCY FACTOR-RELATED"/>
    <property type="match status" value="1"/>
</dbReference>
<dbReference type="Pfam" id="PF01809">
    <property type="entry name" value="YidD"/>
    <property type="match status" value="1"/>
</dbReference>
<dbReference type="SMART" id="SM01234">
    <property type="entry name" value="Haemolytic"/>
    <property type="match status" value="1"/>
</dbReference>
<protein>
    <recommendedName>
        <fullName evidence="1">Putative membrane protein insertion efficiency factor</fullName>
    </recommendedName>
</protein>
<sequence length="78" mass="8667">MNLAQKCLVGAIRVYQLALSPWLGRQCRYLPTCSEYGKEAIEKHGALKGSWLAAKRIGRCRPGCSHGYDPVPPVDPRK</sequence>
<name>YIDD_THIDA</name>
<reference key="1">
    <citation type="journal article" date="2006" name="J. Bacteriol.">
        <title>The genome sequence of the obligately chemolithoautotrophic, facultatively anaerobic bacterium Thiobacillus denitrificans.</title>
        <authorList>
            <person name="Beller H.R."/>
            <person name="Chain P.S."/>
            <person name="Letain T.E."/>
            <person name="Chakicherla A."/>
            <person name="Larimer F.W."/>
            <person name="Richardson P.M."/>
            <person name="Coleman M.A."/>
            <person name="Wood A.P."/>
            <person name="Kelly D.P."/>
        </authorList>
    </citation>
    <scope>NUCLEOTIDE SEQUENCE [LARGE SCALE GENOMIC DNA]</scope>
    <source>
        <strain>ATCC 25259 / T1</strain>
    </source>
</reference>
<gene>
    <name type="ordered locus">Tbd_2535</name>
</gene>
<feature type="chain" id="PRO_0000253195" description="Putative membrane protein insertion efficiency factor">
    <location>
        <begin position="1"/>
        <end position="78"/>
    </location>
</feature>
<accession>Q3SFW8</accession>
<organism>
    <name type="scientific">Thiobacillus denitrificans (strain ATCC 25259 / T1)</name>
    <dbReference type="NCBI Taxonomy" id="292415"/>
    <lineage>
        <taxon>Bacteria</taxon>
        <taxon>Pseudomonadati</taxon>
        <taxon>Pseudomonadota</taxon>
        <taxon>Betaproteobacteria</taxon>
        <taxon>Nitrosomonadales</taxon>
        <taxon>Thiobacillaceae</taxon>
        <taxon>Thiobacillus</taxon>
    </lineage>
</organism>